<organism>
    <name type="scientific">Dissostichus mawsoni</name>
    <name type="common">Antarctic cod</name>
    <dbReference type="NCBI Taxonomy" id="36200"/>
    <lineage>
        <taxon>Eukaryota</taxon>
        <taxon>Metazoa</taxon>
        <taxon>Chordata</taxon>
        <taxon>Craniata</taxon>
        <taxon>Vertebrata</taxon>
        <taxon>Euteleostomi</taxon>
        <taxon>Actinopterygii</taxon>
        <taxon>Neopterygii</taxon>
        <taxon>Teleostei</taxon>
        <taxon>Neoteleostei</taxon>
        <taxon>Acanthomorphata</taxon>
        <taxon>Eupercaria</taxon>
        <taxon>Perciformes</taxon>
        <taxon>Notothenioidei</taxon>
        <taxon>Nototheniidae</taxon>
        <taxon>Dissostichus</taxon>
    </lineage>
</organism>
<evidence type="ECO:0000250" key="1"/>
<evidence type="ECO:0000250" key="2">
    <source>
        <dbReference type="UniProtKB" id="P00338"/>
    </source>
</evidence>
<evidence type="ECO:0000305" key="3"/>
<proteinExistence type="evidence at transcript level"/>
<reference key="1">
    <citation type="journal article" date="1998" name="Proc. Natl. Acad. Sci. U.S.A.">
        <title>Hot spots in cold adaptation: localized increases in conformational flexibility in lactate dehydrogenase A4 orthologs of Antarctic notothenioid fishes.</title>
        <authorList>
            <person name="Fields P.A."/>
            <person name="Somero G.N."/>
        </authorList>
    </citation>
    <scope>NUCLEOTIDE SEQUENCE [MRNA]</scope>
    <source>
        <tissue>Muscle</tissue>
    </source>
</reference>
<dbReference type="EC" id="1.1.1.27" evidence="2"/>
<dbReference type="EMBL" id="AF079827">
    <property type="protein sequence ID" value="AAC63285.1"/>
    <property type="molecule type" value="mRNA"/>
</dbReference>
<dbReference type="SMR" id="O93544"/>
<dbReference type="UniPathway" id="UPA00554">
    <property type="reaction ID" value="UER00611"/>
</dbReference>
<dbReference type="GO" id="GO:0005737">
    <property type="term" value="C:cytoplasm"/>
    <property type="evidence" value="ECO:0007669"/>
    <property type="project" value="UniProtKB-SubCell"/>
</dbReference>
<dbReference type="GO" id="GO:0004459">
    <property type="term" value="F:L-lactate dehydrogenase activity"/>
    <property type="evidence" value="ECO:0007669"/>
    <property type="project" value="UniProtKB-EC"/>
</dbReference>
<dbReference type="GO" id="GO:0006089">
    <property type="term" value="P:lactate metabolic process"/>
    <property type="evidence" value="ECO:0007669"/>
    <property type="project" value="TreeGrafter"/>
</dbReference>
<dbReference type="CDD" id="cd05293">
    <property type="entry name" value="LDH_1"/>
    <property type="match status" value="1"/>
</dbReference>
<dbReference type="FunFam" id="3.40.50.720:FF:000029">
    <property type="entry name" value="L-lactate dehydrogenase A chain"/>
    <property type="match status" value="1"/>
</dbReference>
<dbReference type="FunFam" id="3.90.110.10:FF:000003">
    <property type="entry name" value="L-lactate dehydrogenase A chain"/>
    <property type="match status" value="1"/>
</dbReference>
<dbReference type="Gene3D" id="3.90.110.10">
    <property type="entry name" value="Lactate dehydrogenase/glycoside hydrolase, family 4, C-terminal"/>
    <property type="match status" value="1"/>
</dbReference>
<dbReference type="Gene3D" id="3.40.50.720">
    <property type="entry name" value="NAD(P)-binding Rossmann-like Domain"/>
    <property type="match status" value="1"/>
</dbReference>
<dbReference type="HAMAP" id="MF_00488">
    <property type="entry name" value="Lactate_dehydrog"/>
    <property type="match status" value="1"/>
</dbReference>
<dbReference type="InterPro" id="IPR001557">
    <property type="entry name" value="L-lactate/malate_DH"/>
</dbReference>
<dbReference type="InterPro" id="IPR011304">
    <property type="entry name" value="L-lactate_DH"/>
</dbReference>
<dbReference type="InterPro" id="IPR018177">
    <property type="entry name" value="L-lactate_DH_AS"/>
</dbReference>
<dbReference type="InterPro" id="IPR022383">
    <property type="entry name" value="Lactate/malate_DH_C"/>
</dbReference>
<dbReference type="InterPro" id="IPR001236">
    <property type="entry name" value="Lactate/malate_DH_N"/>
</dbReference>
<dbReference type="InterPro" id="IPR015955">
    <property type="entry name" value="Lactate_DH/Glyco_Ohase_4_C"/>
</dbReference>
<dbReference type="InterPro" id="IPR036291">
    <property type="entry name" value="NAD(P)-bd_dom_sf"/>
</dbReference>
<dbReference type="NCBIfam" id="TIGR01771">
    <property type="entry name" value="L-LDH-NAD"/>
    <property type="match status" value="1"/>
</dbReference>
<dbReference type="NCBIfam" id="NF000824">
    <property type="entry name" value="PRK00066.1"/>
    <property type="match status" value="1"/>
</dbReference>
<dbReference type="PANTHER" id="PTHR43128">
    <property type="entry name" value="L-2-HYDROXYCARBOXYLATE DEHYDROGENASE (NAD(P)(+))"/>
    <property type="match status" value="1"/>
</dbReference>
<dbReference type="PANTHER" id="PTHR43128:SF10">
    <property type="entry name" value="L-LACTATE DEHYDROGENASE A CHAIN"/>
    <property type="match status" value="1"/>
</dbReference>
<dbReference type="Pfam" id="PF02866">
    <property type="entry name" value="Ldh_1_C"/>
    <property type="match status" value="1"/>
</dbReference>
<dbReference type="Pfam" id="PF00056">
    <property type="entry name" value="Ldh_1_N"/>
    <property type="match status" value="1"/>
</dbReference>
<dbReference type="PIRSF" id="PIRSF000102">
    <property type="entry name" value="Lac_mal_DH"/>
    <property type="match status" value="1"/>
</dbReference>
<dbReference type="PRINTS" id="PR00086">
    <property type="entry name" value="LLDHDRGNASE"/>
</dbReference>
<dbReference type="SUPFAM" id="SSF56327">
    <property type="entry name" value="LDH C-terminal domain-like"/>
    <property type="match status" value="1"/>
</dbReference>
<dbReference type="SUPFAM" id="SSF51735">
    <property type="entry name" value="NAD(P)-binding Rossmann-fold domains"/>
    <property type="match status" value="1"/>
</dbReference>
<dbReference type="PROSITE" id="PS00064">
    <property type="entry name" value="L_LDH"/>
    <property type="match status" value="1"/>
</dbReference>
<protein>
    <recommendedName>
        <fullName>L-lactate dehydrogenase A chain</fullName>
        <shortName>LDH-A</shortName>
        <ecNumber evidence="2">1.1.1.27</ecNumber>
    </recommendedName>
</protein>
<accession>O93544</accession>
<gene>
    <name type="primary">ldha</name>
</gene>
<comment type="function">
    <text evidence="2">Interconverts simultaneously and stereospecifically pyruvate and lactate with concomitant interconversion of NADH and NAD(+).</text>
</comment>
<comment type="catalytic activity">
    <reaction evidence="2">
        <text>(S)-lactate + NAD(+) = pyruvate + NADH + H(+)</text>
        <dbReference type="Rhea" id="RHEA:23444"/>
        <dbReference type="ChEBI" id="CHEBI:15361"/>
        <dbReference type="ChEBI" id="CHEBI:15378"/>
        <dbReference type="ChEBI" id="CHEBI:16651"/>
        <dbReference type="ChEBI" id="CHEBI:57540"/>
        <dbReference type="ChEBI" id="CHEBI:57945"/>
        <dbReference type="EC" id="1.1.1.27"/>
    </reaction>
    <physiologicalReaction direction="left-to-right" evidence="2">
        <dbReference type="Rhea" id="RHEA:23445"/>
    </physiologicalReaction>
    <physiologicalReaction direction="right-to-left" evidence="2">
        <dbReference type="Rhea" id="RHEA:23446"/>
    </physiologicalReaction>
</comment>
<comment type="pathway">
    <text evidence="2">Fermentation; pyruvate fermentation to lactate; (S)-lactate from pyruvate: step 1/1.</text>
</comment>
<comment type="subunit">
    <text evidence="1">Homotetramer.</text>
</comment>
<comment type="subcellular location">
    <subcellularLocation>
        <location evidence="1">Cytoplasm</location>
    </subcellularLocation>
</comment>
<comment type="similarity">
    <text evidence="3">Belongs to the LDH/MDH superfamily. LDH family.</text>
</comment>
<feature type="initiator methionine" description="Removed" evidence="1">
    <location>
        <position position="1"/>
    </location>
</feature>
<feature type="chain" id="PRO_0000168436" description="L-lactate dehydrogenase A chain">
    <location>
        <begin position="2"/>
        <end position="331"/>
    </location>
</feature>
<feature type="active site" description="Proton acceptor" evidence="1">
    <location>
        <position position="192"/>
    </location>
</feature>
<feature type="binding site" evidence="1">
    <location>
        <begin position="29"/>
        <end position="57"/>
    </location>
    <ligand>
        <name>NAD(+)</name>
        <dbReference type="ChEBI" id="CHEBI:57540"/>
    </ligand>
</feature>
<feature type="binding site" evidence="1">
    <location>
        <position position="98"/>
    </location>
    <ligand>
        <name>NAD(+)</name>
        <dbReference type="ChEBI" id="CHEBI:57540"/>
    </ligand>
</feature>
<feature type="binding site" evidence="1">
    <location>
        <position position="105"/>
    </location>
    <ligand>
        <name>substrate</name>
    </ligand>
</feature>
<feature type="binding site" evidence="1">
    <location>
        <position position="137"/>
    </location>
    <ligand>
        <name>NAD(+)</name>
        <dbReference type="ChEBI" id="CHEBI:57540"/>
    </ligand>
</feature>
<feature type="binding site" evidence="1">
    <location>
        <position position="137"/>
    </location>
    <ligand>
        <name>substrate</name>
    </ligand>
</feature>
<feature type="binding site" evidence="1">
    <location>
        <position position="168"/>
    </location>
    <ligand>
        <name>substrate</name>
    </ligand>
</feature>
<feature type="binding site" evidence="1">
    <location>
        <position position="247"/>
    </location>
    <ligand>
        <name>substrate</name>
    </ligand>
</feature>
<sequence>MSTKEKLISHVMKEEPVGSRNKVTVVGVGMVGMASAISILLKDLCDELAMVDVMEDKLKGEVMDLQHGSLFLKTKIVGDKDYSVTANSKVVVVTAGARQQEGESRLNLVQRNVNIFKFIIPNIVKYSPNCILMVVSNPVDILTYVAWKLSGFPRNRVIGSGTNLDSARFRHLIGEKLHLHPSSCHAWIVGEHGDSSVPVWSGVNVAGVSLQGLNPQMGTEGDGENWKAIHKEVVDGAYEVIKLKGYTSWAIGMSVADLVESIIKNMHKVHPVSTLVQGMHGVKDEVFLSVPSVLGNSGLTDVIHMTLKAEEEKQLQKSAETLWGVQKELVL</sequence>
<name>LDHA_DISMA</name>
<keyword id="KW-0963">Cytoplasm</keyword>
<keyword id="KW-0520">NAD</keyword>
<keyword id="KW-0560">Oxidoreductase</keyword>